<feature type="chain" id="PRO_0000101257" description="DNA polymerase I, thermostable">
    <location>
        <begin position="1"/>
        <end position="834"/>
    </location>
</feature>
<feature type="domain" description="5'-3' exonuclease" evidence="2">
    <location>
        <begin position="176"/>
        <end position="262"/>
    </location>
</feature>
<feature type="region of interest" description="Polymerase" evidence="1">
    <location>
        <begin position="412"/>
        <end position="834"/>
    </location>
</feature>
<gene>
    <name type="primary">polA</name>
</gene>
<comment type="function">
    <text evidence="3">Has 5'-3' exonuclease activity and no 3'-5' exonuclease activity.</text>
</comment>
<comment type="catalytic activity">
    <reaction evidence="3">
        <text>DNA(n) + a 2'-deoxyribonucleoside 5'-triphosphate = DNA(n+1) + diphosphate</text>
        <dbReference type="Rhea" id="RHEA:22508"/>
        <dbReference type="Rhea" id="RHEA-COMP:17339"/>
        <dbReference type="Rhea" id="RHEA-COMP:17340"/>
        <dbReference type="ChEBI" id="CHEBI:33019"/>
        <dbReference type="ChEBI" id="CHEBI:61560"/>
        <dbReference type="ChEBI" id="CHEBI:173112"/>
        <dbReference type="EC" id="2.7.7.7"/>
    </reaction>
</comment>
<comment type="biophysicochemical properties">
    <temperatureDependence>
        <text evidence="3">Thermostable.</text>
    </temperatureDependence>
</comment>
<comment type="similarity">
    <text evidence="4">Belongs to the DNA polymerase type-A family.</text>
</comment>
<keyword id="KW-0903">Direct protein sequencing</keyword>
<keyword id="KW-0227">DNA damage</keyword>
<keyword id="KW-0234">DNA repair</keyword>
<keyword id="KW-0235">DNA replication</keyword>
<keyword id="KW-0238">DNA-binding</keyword>
<keyword id="KW-0239">DNA-directed DNA polymerase</keyword>
<keyword id="KW-0269">Exonuclease</keyword>
<keyword id="KW-0378">Hydrolase</keyword>
<keyword id="KW-0540">Nuclease</keyword>
<keyword id="KW-0548">Nucleotidyltransferase</keyword>
<keyword id="KW-0808">Transferase</keyword>
<organism>
    <name type="scientific">Thermus caldophilus</name>
    <dbReference type="NCBI Taxonomy" id="272"/>
    <lineage>
        <taxon>Bacteria</taxon>
        <taxon>Thermotogati</taxon>
        <taxon>Deinococcota</taxon>
        <taxon>Deinococci</taxon>
        <taxon>Thermales</taxon>
        <taxon>Thermaceae</taxon>
        <taxon>Thermus</taxon>
    </lineage>
</organism>
<sequence>MEAMLPLFEPKGRVLLVDGHHLAYRTFFALKGLTTSRGEPVQAVYGFAKSLLKALKEDGYKAVFVVFDAKAPSFRHEAYEAYKAGRAPTPEDFPRQLALIKELVDLLGFTRLEVPGYEADDVLATLAKNPEKEGYEVRILTADRDLDQLVSDRVAVLHPEGHLITPEWLWQKYGLKPEQWVDFRALVGDPSDNLPGVKGIGEKTALKLLKEWGSLENLLKNLDRVKPENVREKIKAHLEDLRLSLELSRVRTDLPLEVDLAQGREPDREGLRAFLERLEFGSLLHEFGLLEAPAPLEEAPWPPPEGAFVGFVLSRPEPMWAELKALAACRDGRVHRAADPLAGLKDLKEVRGLLAKDLAVLASREGLDLVPGDDPMLLAYLLDPSNTTPEGVARRYGGEWTEDAAHRALLSERLHRNLLKRLQGEEKLLWLYHEVEKPLSRVLAHMEATGVRLDVAYLQALSLELAEEIRRLEEEVFRLAGHPFNLNSRDQLERVLFDELRLPALGKTQKTGKRSTSAAVLEALREAHPIVEKILQHRELTKLKNTYVDPLPSLVHPNTGRLHTRFNQTATATGRLSSSDPNLQNIPVRTPLGQRIRRAFVAEAGWALVALDYSQIELRVLAHLSGDENLIRVFQEGKDIHTQTASWMFGVPPEAVDPLMRRAAKTVNFGVLYGMSAHRLSQELAIPYEEAVAFIERYFQSFPKVRAWIEKTLEEGRKRGYVETLFGRRRYVPDLNARVKSVREAAERMAFNMPVQGTAADLMKLAMVKLFPRLREMGARMLLQVHDELLLEAPQAGAEEVAALAKEAMEKAYPLAVPLEVEVGMGEDWLSAKG</sequence>
<dbReference type="EC" id="2.7.7.7" evidence="3"/>
<dbReference type="EMBL" id="U62584">
    <property type="protein sequence ID" value="AAB81398.1"/>
    <property type="molecule type" value="Genomic_DNA"/>
</dbReference>
<dbReference type="PIR" id="S33287">
    <property type="entry name" value="S33287"/>
</dbReference>
<dbReference type="SMR" id="P80194"/>
<dbReference type="GO" id="GO:0008409">
    <property type="term" value="F:5'-3' exonuclease activity"/>
    <property type="evidence" value="ECO:0007669"/>
    <property type="project" value="InterPro"/>
</dbReference>
<dbReference type="GO" id="GO:0003677">
    <property type="term" value="F:DNA binding"/>
    <property type="evidence" value="ECO:0007669"/>
    <property type="project" value="UniProtKB-KW"/>
</dbReference>
<dbReference type="GO" id="GO:0003887">
    <property type="term" value="F:DNA-directed DNA polymerase activity"/>
    <property type="evidence" value="ECO:0007669"/>
    <property type="project" value="UniProtKB-KW"/>
</dbReference>
<dbReference type="GO" id="GO:0001882">
    <property type="term" value="F:nucleoside binding"/>
    <property type="evidence" value="ECO:0007669"/>
    <property type="project" value="InterPro"/>
</dbReference>
<dbReference type="GO" id="GO:0006261">
    <property type="term" value="P:DNA-templated DNA replication"/>
    <property type="evidence" value="ECO:0007669"/>
    <property type="project" value="InterPro"/>
</dbReference>
<dbReference type="GO" id="GO:0006302">
    <property type="term" value="P:double-strand break repair"/>
    <property type="evidence" value="ECO:0007669"/>
    <property type="project" value="TreeGrafter"/>
</dbReference>
<dbReference type="CDD" id="cd08637">
    <property type="entry name" value="DNA_pol_A_pol_I_C"/>
    <property type="match status" value="1"/>
</dbReference>
<dbReference type="CDD" id="cd09898">
    <property type="entry name" value="H3TH_53EXO"/>
    <property type="match status" value="1"/>
</dbReference>
<dbReference type="CDD" id="cd09859">
    <property type="entry name" value="PIN_53EXO"/>
    <property type="match status" value="1"/>
</dbReference>
<dbReference type="FunFam" id="1.10.150.20:FF:000002">
    <property type="entry name" value="DNA polymerase I"/>
    <property type="match status" value="1"/>
</dbReference>
<dbReference type="FunFam" id="1.10.150.20:FF:000003">
    <property type="entry name" value="DNA polymerase I"/>
    <property type="match status" value="1"/>
</dbReference>
<dbReference type="FunFam" id="1.20.1060.10:FF:000001">
    <property type="entry name" value="DNA polymerase I"/>
    <property type="match status" value="1"/>
</dbReference>
<dbReference type="Gene3D" id="3.30.70.370">
    <property type="match status" value="1"/>
</dbReference>
<dbReference type="Gene3D" id="1.10.150.20">
    <property type="entry name" value="5' to 3' exonuclease, C-terminal subdomain"/>
    <property type="match status" value="2"/>
</dbReference>
<dbReference type="Gene3D" id="3.40.50.1010">
    <property type="entry name" value="5'-nuclease"/>
    <property type="match status" value="1"/>
</dbReference>
<dbReference type="Gene3D" id="3.30.420.10">
    <property type="entry name" value="Ribonuclease H-like superfamily/Ribonuclease H"/>
    <property type="match status" value="1"/>
</dbReference>
<dbReference type="Gene3D" id="1.20.1060.10">
    <property type="entry name" value="Taq DNA Polymerase, Chain T, domain 4"/>
    <property type="match status" value="1"/>
</dbReference>
<dbReference type="InterPro" id="IPR020046">
    <property type="entry name" value="5-3_exonucl_a-hlix_arch_N"/>
</dbReference>
<dbReference type="InterPro" id="IPR002421">
    <property type="entry name" value="5-3_exonuclease"/>
</dbReference>
<dbReference type="InterPro" id="IPR036279">
    <property type="entry name" value="5-3_exonuclease_C_sf"/>
</dbReference>
<dbReference type="InterPro" id="IPR019760">
    <property type="entry name" value="DNA-dir_DNA_pol_A_CS"/>
</dbReference>
<dbReference type="InterPro" id="IPR001098">
    <property type="entry name" value="DNA-dir_DNA_pol_A_palm_dom"/>
</dbReference>
<dbReference type="InterPro" id="IPR043502">
    <property type="entry name" value="DNA/RNA_pol_sf"/>
</dbReference>
<dbReference type="InterPro" id="IPR020045">
    <property type="entry name" value="DNA_polI_H3TH"/>
</dbReference>
<dbReference type="InterPro" id="IPR018320">
    <property type="entry name" value="DNA_polymerase_1"/>
</dbReference>
<dbReference type="InterPro" id="IPR002298">
    <property type="entry name" value="DNA_polymerase_A"/>
</dbReference>
<dbReference type="InterPro" id="IPR008918">
    <property type="entry name" value="HhH2"/>
</dbReference>
<dbReference type="InterPro" id="IPR029060">
    <property type="entry name" value="PIN-like_dom_sf"/>
</dbReference>
<dbReference type="InterPro" id="IPR012337">
    <property type="entry name" value="RNaseH-like_sf"/>
</dbReference>
<dbReference type="InterPro" id="IPR036397">
    <property type="entry name" value="RNaseH_sf"/>
</dbReference>
<dbReference type="InterPro" id="IPR015361">
    <property type="entry name" value="Taq_pol_thermo_exonuc"/>
</dbReference>
<dbReference type="NCBIfam" id="TIGR00593">
    <property type="entry name" value="pola"/>
    <property type="match status" value="1"/>
</dbReference>
<dbReference type="PANTHER" id="PTHR10133">
    <property type="entry name" value="DNA POLYMERASE I"/>
    <property type="match status" value="1"/>
</dbReference>
<dbReference type="PANTHER" id="PTHR10133:SF27">
    <property type="entry name" value="DNA POLYMERASE NU"/>
    <property type="match status" value="1"/>
</dbReference>
<dbReference type="Pfam" id="PF01367">
    <property type="entry name" value="5_3_exonuc"/>
    <property type="match status" value="1"/>
</dbReference>
<dbReference type="Pfam" id="PF02739">
    <property type="entry name" value="5_3_exonuc_N"/>
    <property type="match status" value="1"/>
</dbReference>
<dbReference type="Pfam" id="PF00476">
    <property type="entry name" value="DNA_pol_A"/>
    <property type="match status" value="1"/>
</dbReference>
<dbReference type="Pfam" id="PF09281">
    <property type="entry name" value="Taq-exonuc"/>
    <property type="match status" value="1"/>
</dbReference>
<dbReference type="PRINTS" id="PR00868">
    <property type="entry name" value="DNAPOLI"/>
</dbReference>
<dbReference type="SMART" id="SM00475">
    <property type="entry name" value="53EXOc"/>
    <property type="match status" value="1"/>
</dbReference>
<dbReference type="SMART" id="SM00279">
    <property type="entry name" value="HhH2"/>
    <property type="match status" value="1"/>
</dbReference>
<dbReference type="SMART" id="SM00482">
    <property type="entry name" value="POLAc"/>
    <property type="match status" value="1"/>
</dbReference>
<dbReference type="SUPFAM" id="SSF47807">
    <property type="entry name" value="5' to 3' exonuclease, C-terminal subdomain"/>
    <property type="match status" value="1"/>
</dbReference>
<dbReference type="SUPFAM" id="SSF56672">
    <property type="entry name" value="DNA/RNA polymerases"/>
    <property type="match status" value="1"/>
</dbReference>
<dbReference type="SUPFAM" id="SSF88723">
    <property type="entry name" value="PIN domain-like"/>
    <property type="match status" value="1"/>
</dbReference>
<dbReference type="SUPFAM" id="SSF53098">
    <property type="entry name" value="Ribonuclease H-like"/>
    <property type="match status" value="1"/>
</dbReference>
<dbReference type="PROSITE" id="PS00447">
    <property type="entry name" value="DNA_POLYMERASE_A"/>
    <property type="match status" value="1"/>
</dbReference>
<proteinExistence type="evidence at protein level"/>
<accession>P80194</accession>
<name>DPO1_THECA</name>
<protein>
    <recommendedName>
        <fullName>DNA polymerase I, thermostable</fullName>
        <ecNumber evidence="3">2.7.7.7</ecNumber>
    </recommendedName>
    <alternativeName>
        <fullName>TAC polymerase 1</fullName>
    </alternativeName>
</protein>
<reference key="1">
    <citation type="submission" date="1996-08" db="EMBL/GenBank/DDBJ databases">
        <authorList>
            <person name="Kwon S.-T."/>
            <person name="Kim J.S."/>
            <person name="Park J.H."/>
            <person name="Kim H."/>
            <person name="Lee D.-S."/>
        </authorList>
    </citation>
    <scope>NUCLEOTIDE SEQUENCE [GENOMIC DNA]</scope>
    <source>
        <strain>GK24</strain>
    </source>
</reference>
<reference key="2">
    <citation type="journal article" date="1993" name="Eur. J. Biochem.">
        <title>Purification and characterization of Thermus caldophilus GK24 DNA polymerase.</title>
        <authorList>
            <person name="Park J.H."/>
            <person name="Kim J.S."/>
            <person name="Kwon S.-T."/>
            <person name="Lee D.-S."/>
        </authorList>
    </citation>
    <scope>PROTEIN SEQUENCE OF 1-21</scope>
    <scope>FUNCTION</scope>
    <scope>CATALYTIC ACTIVITY</scope>
    <scope>BIOPHYSICOCHEMICAL PROPERTIES</scope>
    <source>
        <strain>GK24</strain>
    </source>
</reference>
<evidence type="ECO:0000250" key="1"/>
<evidence type="ECO:0000255" key="2"/>
<evidence type="ECO:0000269" key="3">
    <source>
    </source>
</evidence>
<evidence type="ECO:0000305" key="4"/>